<proteinExistence type="evidence at protein level"/>
<keyword id="KW-0002">3D-structure</keyword>
<keyword id="KW-0150">Chloroplast</keyword>
<keyword id="KW-0472">Membrane</keyword>
<keyword id="KW-0602">Photosynthesis</keyword>
<keyword id="KW-0603">Photosystem I</keyword>
<keyword id="KW-0934">Plastid</keyword>
<keyword id="KW-1185">Reference proteome</keyword>
<keyword id="KW-0809">Transit peptide</keyword>
<keyword id="KW-0812">Transmembrane</keyword>
<keyword id="KW-1133">Transmembrane helix</keyword>
<feature type="transit peptide" description="Chloroplast" evidence="1">
    <location>
        <begin position="1"/>
        <end position="60"/>
    </location>
</feature>
<feature type="chain" id="PRO_0000029387" description="Photosystem I reaction center subunit V, chloroplastic">
    <location>
        <begin position="61"/>
        <end position="160"/>
    </location>
</feature>
<feature type="transmembrane region" description="Helical" evidence="2">
    <location>
        <begin position="66"/>
        <end position="86"/>
    </location>
</feature>
<feature type="transmembrane region" description="Helical" evidence="2">
    <location>
        <begin position="129"/>
        <end position="149"/>
    </location>
</feature>
<feature type="helix" evidence="4">
    <location>
        <begin position="64"/>
        <end position="81"/>
    </location>
</feature>
<feature type="helix" evidence="4">
    <location>
        <begin position="84"/>
        <end position="94"/>
    </location>
</feature>
<feature type="turn" evidence="4">
    <location>
        <begin position="104"/>
        <end position="108"/>
    </location>
</feature>
<feature type="helix" evidence="5">
    <location>
        <begin position="110"/>
        <end position="112"/>
    </location>
</feature>
<feature type="helix" evidence="4">
    <location>
        <begin position="116"/>
        <end position="119"/>
    </location>
</feature>
<feature type="strand" evidence="6">
    <location>
        <begin position="123"/>
        <end position="125"/>
    </location>
</feature>
<feature type="helix" evidence="4">
    <location>
        <begin position="129"/>
        <end position="150"/>
    </location>
</feature>
<protein>
    <recommendedName>
        <fullName>Photosystem I reaction center subunit V, chloroplastic</fullName>
    </recommendedName>
    <alternativeName>
        <fullName>PSI-G</fullName>
    </alternativeName>
</protein>
<evidence type="ECO:0000250" key="1"/>
<evidence type="ECO:0000255" key="2"/>
<evidence type="ECO:0000305" key="3"/>
<evidence type="ECO:0007829" key="4">
    <source>
        <dbReference type="PDB" id="5L8R"/>
    </source>
</evidence>
<evidence type="ECO:0007829" key="5">
    <source>
        <dbReference type="PDB" id="8J6Z"/>
    </source>
</evidence>
<evidence type="ECO:0007829" key="6">
    <source>
        <dbReference type="PDB" id="8J7A"/>
    </source>
</evidence>
<comment type="function">
    <text>Not yet known.</text>
</comment>
<comment type="subcellular location">
    <subcellularLocation>
        <location evidence="2">Plastid</location>
        <location evidence="2">Chloroplast membrane</location>
        <topology evidence="2">Multi-pass membrane protein</topology>
    </subcellularLocation>
</comment>
<comment type="similarity">
    <text evidence="3">Belongs to the PsaG/PsaK family.</text>
</comment>
<name>PSAG_ARATH</name>
<organism>
    <name type="scientific">Arabidopsis thaliana</name>
    <name type="common">Mouse-ear cress</name>
    <dbReference type="NCBI Taxonomy" id="3702"/>
    <lineage>
        <taxon>Eukaryota</taxon>
        <taxon>Viridiplantae</taxon>
        <taxon>Streptophyta</taxon>
        <taxon>Embryophyta</taxon>
        <taxon>Tracheophyta</taxon>
        <taxon>Spermatophyta</taxon>
        <taxon>Magnoliopsida</taxon>
        <taxon>eudicotyledons</taxon>
        <taxon>Gunneridae</taxon>
        <taxon>Pentapetalae</taxon>
        <taxon>rosids</taxon>
        <taxon>malvids</taxon>
        <taxon>Brassicales</taxon>
        <taxon>Brassicaceae</taxon>
        <taxon>Camelineae</taxon>
        <taxon>Arabidopsis</taxon>
    </lineage>
</organism>
<sequence>MATSASALLSPTTFSTAISHKNPNSISFHGLRPLRLGGSSSALPKLSTTGRKSSSAVVRAELSPSIVISLSTGLSLFLGRFVFFNFQRENVAKQGLPEQNGKTHFEAGDDRAKEYVSLLKSNDPIGFNIVDVLAWGSIGHIVAYYILATSSNGYDPSFFG</sequence>
<reference key="1">
    <citation type="submission" date="1999-08" db="EMBL/GenBank/DDBJ databases">
        <title>Sequences and map position of 31 Arabidopsis thaliana cDNAs encoding organellar polypeptides.</title>
        <authorList>
            <person name="Legen J."/>
            <person name="Misera S."/>
            <person name="Herrmann R.G."/>
            <person name="Altschmied L."/>
        </authorList>
    </citation>
    <scope>NUCLEOTIDE SEQUENCE [MRNA]</scope>
    <source>
        <strain>cv. Columbia</strain>
    </source>
</reference>
<reference key="2">
    <citation type="journal article" date="2000" name="Nature">
        <title>Sequence and analysis of chromosome 1 of the plant Arabidopsis thaliana.</title>
        <authorList>
            <person name="Theologis A."/>
            <person name="Ecker J.R."/>
            <person name="Palm C.J."/>
            <person name="Federspiel N.A."/>
            <person name="Kaul S."/>
            <person name="White O."/>
            <person name="Alonso J."/>
            <person name="Altafi H."/>
            <person name="Araujo R."/>
            <person name="Bowman C.L."/>
            <person name="Brooks S.Y."/>
            <person name="Buehler E."/>
            <person name="Chan A."/>
            <person name="Chao Q."/>
            <person name="Chen H."/>
            <person name="Cheuk R.F."/>
            <person name="Chin C.W."/>
            <person name="Chung M.K."/>
            <person name="Conn L."/>
            <person name="Conway A.B."/>
            <person name="Conway A.R."/>
            <person name="Creasy T.H."/>
            <person name="Dewar K."/>
            <person name="Dunn P."/>
            <person name="Etgu P."/>
            <person name="Feldblyum T.V."/>
            <person name="Feng J.-D."/>
            <person name="Fong B."/>
            <person name="Fujii C.Y."/>
            <person name="Gill J.E."/>
            <person name="Goldsmith A.D."/>
            <person name="Haas B."/>
            <person name="Hansen N.F."/>
            <person name="Hughes B."/>
            <person name="Huizar L."/>
            <person name="Hunter J.L."/>
            <person name="Jenkins J."/>
            <person name="Johnson-Hopson C."/>
            <person name="Khan S."/>
            <person name="Khaykin E."/>
            <person name="Kim C.J."/>
            <person name="Koo H.L."/>
            <person name="Kremenetskaia I."/>
            <person name="Kurtz D.B."/>
            <person name="Kwan A."/>
            <person name="Lam B."/>
            <person name="Langin-Hooper S."/>
            <person name="Lee A."/>
            <person name="Lee J.M."/>
            <person name="Lenz C.A."/>
            <person name="Li J.H."/>
            <person name="Li Y.-P."/>
            <person name="Lin X."/>
            <person name="Liu S.X."/>
            <person name="Liu Z.A."/>
            <person name="Luros J.S."/>
            <person name="Maiti R."/>
            <person name="Marziali A."/>
            <person name="Militscher J."/>
            <person name="Miranda M."/>
            <person name="Nguyen M."/>
            <person name="Nierman W.C."/>
            <person name="Osborne B.I."/>
            <person name="Pai G."/>
            <person name="Peterson J."/>
            <person name="Pham P.K."/>
            <person name="Rizzo M."/>
            <person name="Rooney T."/>
            <person name="Rowley D."/>
            <person name="Sakano H."/>
            <person name="Salzberg S.L."/>
            <person name="Schwartz J.R."/>
            <person name="Shinn P."/>
            <person name="Southwick A.M."/>
            <person name="Sun H."/>
            <person name="Tallon L.J."/>
            <person name="Tambunga G."/>
            <person name="Toriumi M.J."/>
            <person name="Town C.D."/>
            <person name="Utterback T."/>
            <person name="Van Aken S."/>
            <person name="Vaysberg M."/>
            <person name="Vysotskaia V.S."/>
            <person name="Walker M."/>
            <person name="Wu D."/>
            <person name="Yu G."/>
            <person name="Fraser C.M."/>
            <person name="Venter J.C."/>
            <person name="Davis R.W."/>
        </authorList>
    </citation>
    <scope>NUCLEOTIDE SEQUENCE [LARGE SCALE GENOMIC DNA]</scope>
    <source>
        <strain>cv. Columbia</strain>
    </source>
</reference>
<reference key="3">
    <citation type="journal article" date="2017" name="Plant J.">
        <title>Araport11: a complete reannotation of the Arabidopsis thaliana reference genome.</title>
        <authorList>
            <person name="Cheng C.Y."/>
            <person name="Krishnakumar V."/>
            <person name="Chan A.P."/>
            <person name="Thibaud-Nissen F."/>
            <person name="Schobel S."/>
            <person name="Town C.D."/>
        </authorList>
    </citation>
    <scope>GENOME REANNOTATION</scope>
    <source>
        <strain>cv. Columbia</strain>
    </source>
</reference>
<reference key="4">
    <citation type="journal article" date="2003" name="Science">
        <title>Empirical analysis of transcriptional activity in the Arabidopsis genome.</title>
        <authorList>
            <person name="Yamada K."/>
            <person name="Lim J."/>
            <person name="Dale J.M."/>
            <person name="Chen H."/>
            <person name="Shinn P."/>
            <person name="Palm C.J."/>
            <person name="Southwick A.M."/>
            <person name="Wu H.C."/>
            <person name="Kim C.J."/>
            <person name="Nguyen M."/>
            <person name="Pham P.K."/>
            <person name="Cheuk R.F."/>
            <person name="Karlin-Newmann G."/>
            <person name="Liu S.X."/>
            <person name="Lam B."/>
            <person name="Sakano H."/>
            <person name="Wu T."/>
            <person name="Yu G."/>
            <person name="Miranda M."/>
            <person name="Quach H.L."/>
            <person name="Tripp M."/>
            <person name="Chang C.H."/>
            <person name="Lee J.M."/>
            <person name="Toriumi M.J."/>
            <person name="Chan M.M."/>
            <person name="Tang C.C."/>
            <person name="Onodera C.S."/>
            <person name="Deng J.M."/>
            <person name="Akiyama K."/>
            <person name="Ansari Y."/>
            <person name="Arakawa T."/>
            <person name="Banh J."/>
            <person name="Banno F."/>
            <person name="Bowser L."/>
            <person name="Brooks S.Y."/>
            <person name="Carninci P."/>
            <person name="Chao Q."/>
            <person name="Choy N."/>
            <person name="Enju A."/>
            <person name="Goldsmith A.D."/>
            <person name="Gurjal M."/>
            <person name="Hansen N.F."/>
            <person name="Hayashizaki Y."/>
            <person name="Johnson-Hopson C."/>
            <person name="Hsuan V.W."/>
            <person name="Iida K."/>
            <person name="Karnes M."/>
            <person name="Khan S."/>
            <person name="Koesema E."/>
            <person name="Ishida J."/>
            <person name="Jiang P.X."/>
            <person name="Jones T."/>
            <person name="Kawai J."/>
            <person name="Kamiya A."/>
            <person name="Meyers C."/>
            <person name="Nakajima M."/>
            <person name="Narusaka M."/>
            <person name="Seki M."/>
            <person name="Sakurai T."/>
            <person name="Satou M."/>
            <person name="Tamse R."/>
            <person name="Vaysberg M."/>
            <person name="Wallender E.K."/>
            <person name="Wong C."/>
            <person name="Yamamura Y."/>
            <person name="Yuan S."/>
            <person name="Shinozaki K."/>
            <person name="Davis R.W."/>
            <person name="Theologis A."/>
            <person name="Ecker J.R."/>
        </authorList>
    </citation>
    <scope>NUCLEOTIDE SEQUENCE [LARGE SCALE MRNA]</scope>
    <source>
        <strain>cv. Columbia</strain>
    </source>
</reference>
<reference key="5">
    <citation type="journal article" date="1996" name="Plant J.">
        <title>Further progress towards a catalogue of all Arabidopsis genes: analysis of a set of 5000 non-redundant ESTs.</title>
        <authorList>
            <person name="Cooke R."/>
            <person name="Raynal M."/>
            <person name="Laudie M."/>
            <person name="Grellet F."/>
            <person name="Delseny M."/>
            <person name="Morris P.-C."/>
            <person name="Guerrier D."/>
            <person name="Giraudat J."/>
            <person name="Quigley F."/>
            <person name="Clabault G."/>
            <person name="Li Y.-F."/>
            <person name="Mache R."/>
            <person name="Krivitzky M."/>
            <person name="Gy I.J.-J."/>
            <person name="Kreis M."/>
            <person name="Lecharny A."/>
            <person name="Parmentier Y."/>
            <person name="Marbach J."/>
            <person name="Fleck J."/>
            <person name="Clement B."/>
            <person name="Philipps G."/>
            <person name="Herve C."/>
            <person name="Bardet C."/>
            <person name="Tremousaygue D."/>
            <person name="Lescure B."/>
            <person name="Lacomme C."/>
            <person name="Roby D."/>
            <person name="Jourjon M.-F."/>
            <person name="Chabrier P."/>
            <person name="Charpenteau J.-L."/>
            <person name="Desprez T."/>
            <person name="Amselem J."/>
            <person name="Chiapello H."/>
            <person name="Hoefte H."/>
        </authorList>
    </citation>
    <scope>NUCLEOTIDE SEQUENCE [LARGE SCALE MRNA] OF 27-127</scope>
    <source>
        <strain>cv. Columbia</strain>
    </source>
</reference>
<accession>Q9S7N7</accession>
<accession>Q42310</accession>
<dbReference type="EMBL" id="AJ245630">
    <property type="protein sequence ID" value="CAB52748.1"/>
    <property type="molecule type" value="mRNA"/>
</dbReference>
<dbReference type="EMBL" id="AC002328">
    <property type="status" value="NOT_ANNOTATED_CDS"/>
    <property type="molecule type" value="Genomic_DNA"/>
</dbReference>
<dbReference type="EMBL" id="CP002684">
    <property type="protein sequence ID" value="AEE33281.1"/>
    <property type="molecule type" value="Genomic_DNA"/>
</dbReference>
<dbReference type="EMBL" id="AF326870">
    <property type="protein sequence ID" value="AAG41452.1"/>
    <property type="molecule type" value="mRNA"/>
</dbReference>
<dbReference type="EMBL" id="AF324710">
    <property type="protein sequence ID" value="AAG40061.1"/>
    <property type="molecule type" value="mRNA"/>
</dbReference>
<dbReference type="EMBL" id="AF339692">
    <property type="protein sequence ID" value="AAK00374.1"/>
    <property type="molecule type" value="mRNA"/>
</dbReference>
<dbReference type="EMBL" id="AF378859">
    <property type="protein sequence ID" value="AAK55662.1"/>
    <property type="molecule type" value="mRNA"/>
</dbReference>
<dbReference type="EMBL" id="AY050463">
    <property type="protein sequence ID" value="AAK91476.1"/>
    <property type="molecule type" value="mRNA"/>
</dbReference>
<dbReference type="EMBL" id="Z37244">
    <property type="protein sequence ID" value="CAA85530.1"/>
    <property type="molecule type" value="mRNA"/>
</dbReference>
<dbReference type="RefSeq" id="NP_175963.1">
    <property type="nucleotide sequence ID" value="NM_104443.2"/>
</dbReference>
<dbReference type="PDB" id="5L8R">
    <property type="method" value="X-ray"/>
    <property type="resolution" value="2.60 A"/>
    <property type="chains" value="G=62-158"/>
</dbReference>
<dbReference type="PDB" id="7WFD">
    <property type="method" value="EM"/>
    <property type="resolution" value="3.25 A"/>
    <property type="chains" value="AG=1-160"/>
</dbReference>
<dbReference type="PDB" id="7WFE">
    <property type="method" value="EM"/>
    <property type="resolution" value="3.25 A"/>
    <property type="chains" value="BG=1-160"/>
</dbReference>
<dbReference type="PDB" id="7WG5">
    <property type="method" value="EM"/>
    <property type="resolution" value="3.89 A"/>
    <property type="chains" value="AG/BG=1-160"/>
</dbReference>
<dbReference type="PDB" id="8J6Z">
    <property type="method" value="EM"/>
    <property type="resolution" value="2.79 A"/>
    <property type="chains" value="G=1-160"/>
</dbReference>
<dbReference type="PDB" id="8J7A">
    <property type="method" value="EM"/>
    <property type="resolution" value="3.06 A"/>
    <property type="chains" value="G=1-160"/>
</dbReference>
<dbReference type="PDB" id="8J7B">
    <property type="method" value="EM"/>
    <property type="resolution" value="3.22 A"/>
    <property type="chains" value="G=1-160"/>
</dbReference>
<dbReference type="PDBsum" id="5L8R"/>
<dbReference type="PDBsum" id="7WFD"/>
<dbReference type="PDBsum" id="7WFE"/>
<dbReference type="PDBsum" id="7WG5"/>
<dbReference type="PDBsum" id="8J6Z"/>
<dbReference type="PDBsum" id="8J7A"/>
<dbReference type="PDBsum" id="8J7B"/>
<dbReference type="EMDB" id="EMD-32462"/>
<dbReference type="EMDB" id="EMD-32463"/>
<dbReference type="EMDB" id="EMD-32477"/>
<dbReference type="EMDB" id="EMD-36021"/>
<dbReference type="EMDB" id="EMD-36036"/>
<dbReference type="EMDB" id="EMD-36037"/>
<dbReference type="SMR" id="Q9S7N7"/>
<dbReference type="BioGRID" id="27241">
    <property type="interactions" value="21"/>
</dbReference>
<dbReference type="FunCoup" id="Q9S7N7">
    <property type="interactions" value="1007"/>
</dbReference>
<dbReference type="IntAct" id="Q9S7N7">
    <property type="interactions" value="1"/>
</dbReference>
<dbReference type="STRING" id="3702.Q9S7N7"/>
<dbReference type="TCDB" id="5.B.4.1.1">
    <property type="family name" value="the plant photosystem i supercomplex (psi) family"/>
</dbReference>
<dbReference type="iPTMnet" id="Q9S7N7"/>
<dbReference type="PaxDb" id="3702-AT1G55670.1"/>
<dbReference type="ProteomicsDB" id="226390"/>
<dbReference type="EnsemblPlants" id="AT1G55670.1">
    <property type="protein sequence ID" value="AT1G55670.1"/>
    <property type="gene ID" value="AT1G55670"/>
</dbReference>
<dbReference type="GeneID" id="842016"/>
<dbReference type="Gramene" id="AT1G55670.1">
    <property type="protein sequence ID" value="AT1G55670.1"/>
    <property type="gene ID" value="AT1G55670"/>
</dbReference>
<dbReference type="KEGG" id="ath:AT1G55670"/>
<dbReference type="Araport" id="AT1G55670"/>
<dbReference type="TAIR" id="AT1G55670">
    <property type="gene designation" value="PSAG"/>
</dbReference>
<dbReference type="eggNOG" id="ENOG502RZ2U">
    <property type="taxonomic scope" value="Eukaryota"/>
</dbReference>
<dbReference type="HOGENOM" id="CLU_136460_0_0_1"/>
<dbReference type="InParanoid" id="Q9S7N7"/>
<dbReference type="OMA" id="ISRSHTH"/>
<dbReference type="OrthoDB" id="494978at2759"/>
<dbReference type="PhylomeDB" id="Q9S7N7"/>
<dbReference type="BioCyc" id="MetaCyc:AT1G55670-MONOMER"/>
<dbReference type="CD-CODE" id="4299E36E">
    <property type="entry name" value="Nucleolus"/>
</dbReference>
<dbReference type="PRO" id="PR:Q9S7N7"/>
<dbReference type="Proteomes" id="UP000006548">
    <property type="component" value="Chromosome 1"/>
</dbReference>
<dbReference type="ExpressionAtlas" id="Q9S7N7">
    <property type="expression patterns" value="baseline and differential"/>
</dbReference>
<dbReference type="GO" id="GO:0009507">
    <property type="term" value="C:chloroplast"/>
    <property type="evidence" value="ECO:0007005"/>
    <property type="project" value="TAIR"/>
</dbReference>
<dbReference type="GO" id="GO:0009941">
    <property type="term" value="C:chloroplast envelope"/>
    <property type="evidence" value="ECO:0007005"/>
    <property type="project" value="TAIR"/>
</dbReference>
<dbReference type="GO" id="GO:0031969">
    <property type="term" value="C:chloroplast membrane"/>
    <property type="evidence" value="ECO:0007669"/>
    <property type="project" value="UniProtKB-SubCell"/>
</dbReference>
<dbReference type="GO" id="GO:0030093">
    <property type="term" value="C:chloroplast photosystem I"/>
    <property type="evidence" value="ECO:0000314"/>
    <property type="project" value="TAIR"/>
</dbReference>
<dbReference type="GO" id="GO:0009534">
    <property type="term" value="C:chloroplast thylakoid"/>
    <property type="evidence" value="ECO:0007005"/>
    <property type="project" value="TAIR"/>
</dbReference>
<dbReference type="GO" id="GO:0009535">
    <property type="term" value="C:chloroplast thylakoid membrane"/>
    <property type="evidence" value="ECO:0000314"/>
    <property type="project" value="TAIR"/>
</dbReference>
<dbReference type="GO" id="GO:0005634">
    <property type="term" value="C:nucleus"/>
    <property type="evidence" value="ECO:0007005"/>
    <property type="project" value="TAIR"/>
</dbReference>
<dbReference type="GO" id="GO:0009579">
    <property type="term" value="C:thylakoid"/>
    <property type="evidence" value="ECO:0007005"/>
    <property type="project" value="TAIR"/>
</dbReference>
<dbReference type="GO" id="GO:0015979">
    <property type="term" value="P:photosynthesis"/>
    <property type="evidence" value="ECO:0000315"/>
    <property type="project" value="TAIR"/>
</dbReference>
<dbReference type="GO" id="GO:0009773">
    <property type="term" value="P:photosynthetic electron transport in photosystem I"/>
    <property type="evidence" value="ECO:0000315"/>
    <property type="project" value="TAIR"/>
</dbReference>
<dbReference type="GO" id="GO:0009780">
    <property type="term" value="P:photosynthetic NADP+ reduction"/>
    <property type="evidence" value="ECO:0000315"/>
    <property type="project" value="TAIR"/>
</dbReference>
<dbReference type="GO" id="GO:0042550">
    <property type="term" value="P:photosystem I stabilization"/>
    <property type="evidence" value="ECO:0000315"/>
    <property type="project" value="TAIR"/>
</dbReference>
<dbReference type="GO" id="GO:0050821">
    <property type="term" value="P:protein stabilization"/>
    <property type="evidence" value="ECO:0000315"/>
    <property type="project" value="TAIR"/>
</dbReference>
<dbReference type="FunFam" id="1.10.286.40:FF:000002">
    <property type="entry name" value="Photosystem I reaction center subunit V"/>
    <property type="match status" value="1"/>
</dbReference>
<dbReference type="Gene3D" id="1.10.286.40">
    <property type="entry name" value="Chlorophyll a-b binding protein like"/>
    <property type="match status" value="1"/>
</dbReference>
<dbReference type="InterPro" id="IPR017494">
    <property type="entry name" value="PSI_PsaG"/>
</dbReference>
<dbReference type="InterPro" id="IPR000549">
    <property type="entry name" value="PSI_PsaG/PsaK"/>
</dbReference>
<dbReference type="InterPro" id="IPR023618">
    <property type="entry name" value="PSI_PsaG/PsaK_dom"/>
</dbReference>
<dbReference type="InterPro" id="IPR016370">
    <property type="entry name" value="PSI_PsaG/PsaK_pln"/>
</dbReference>
<dbReference type="NCBIfam" id="TIGR03051">
    <property type="entry name" value="PS_I_psaG_plant"/>
    <property type="match status" value="1"/>
</dbReference>
<dbReference type="PANTHER" id="PTHR34195:SF1">
    <property type="entry name" value="PHOTOSYSTEM I REACTION CENTER SUBUNIT V, CHLOROPLASTIC"/>
    <property type="match status" value="1"/>
</dbReference>
<dbReference type="PANTHER" id="PTHR34195">
    <property type="entry name" value="PHOTOSYSTEM I REACTION CENTER SUBUNIT V, CHLOROPLASTIC-RELATED"/>
    <property type="match status" value="1"/>
</dbReference>
<dbReference type="Pfam" id="PF01241">
    <property type="entry name" value="PSI_PSAK"/>
    <property type="match status" value="1"/>
</dbReference>
<dbReference type="PIRSF" id="PIRSF002912">
    <property type="entry name" value="PSI_PsaK"/>
    <property type="match status" value="1"/>
</dbReference>
<dbReference type="PROSITE" id="PS01026">
    <property type="entry name" value="PHOTOSYSTEM_I_PSAGK"/>
    <property type="match status" value="1"/>
</dbReference>
<gene>
    <name type="primary">PSAG</name>
    <name type="ordered locus">At1g55670</name>
    <name type="ORF">F20N2.21</name>
    <name type="ORF">F20N2.33</name>
    <name type="ORF">F20N2_3</name>
</gene>